<keyword id="KW-0414">Isoprene biosynthesis</keyword>
<keyword id="KW-0456">Lyase</keyword>
<keyword id="KW-0479">Metal-binding</keyword>
<keyword id="KW-1185">Reference proteome</keyword>
<protein>
    <recommendedName>
        <fullName evidence="1">2-C-methyl-D-erythritol 2,4-cyclodiphosphate synthase</fullName>
        <shortName evidence="1">MECDP-synthase</shortName>
        <shortName evidence="1">MECPP-synthase</shortName>
        <shortName evidence="1">MECPS</shortName>
        <ecNumber evidence="1">4.6.1.12</ecNumber>
    </recommendedName>
</protein>
<gene>
    <name evidence="1" type="primary">ispF</name>
    <name type="ordered locus">Sfum_1636</name>
</gene>
<reference key="1">
    <citation type="submission" date="2006-10" db="EMBL/GenBank/DDBJ databases">
        <title>Complete sequence of Syntrophobacter fumaroxidans MPOB.</title>
        <authorList>
            <consortium name="US DOE Joint Genome Institute"/>
            <person name="Copeland A."/>
            <person name="Lucas S."/>
            <person name="Lapidus A."/>
            <person name="Barry K."/>
            <person name="Detter J.C."/>
            <person name="Glavina del Rio T."/>
            <person name="Hammon N."/>
            <person name="Israni S."/>
            <person name="Pitluck S."/>
            <person name="Goltsman E.G."/>
            <person name="Martinez M."/>
            <person name="Schmutz J."/>
            <person name="Larimer F."/>
            <person name="Land M."/>
            <person name="Hauser L."/>
            <person name="Kyrpides N."/>
            <person name="Kim E."/>
            <person name="Boone D.R."/>
            <person name="Brockman F."/>
            <person name="Culley D."/>
            <person name="Ferry J."/>
            <person name="Gunsalus R."/>
            <person name="McInerney M.J."/>
            <person name="Morrison M."/>
            <person name="Plugge C."/>
            <person name="Rohlin L."/>
            <person name="Scholten J."/>
            <person name="Sieber J."/>
            <person name="Stams A.J.M."/>
            <person name="Worm P."/>
            <person name="Henstra A.M."/>
            <person name="Richardson P."/>
        </authorList>
    </citation>
    <scope>NUCLEOTIDE SEQUENCE [LARGE SCALE GENOMIC DNA]</scope>
    <source>
        <strain>DSM 10017 / MPOB</strain>
    </source>
</reference>
<dbReference type="EC" id="4.6.1.12" evidence="1"/>
<dbReference type="EMBL" id="CP000478">
    <property type="protein sequence ID" value="ABK17323.1"/>
    <property type="molecule type" value="Genomic_DNA"/>
</dbReference>
<dbReference type="RefSeq" id="WP_011698493.1">
    <property type="nucleotide sequence ID" value="NC_008554.1"/>
</dbReference>
<dbReference type="SMR" id="A0LIS1"/>
<dbReference type="FunCoup" id="A0LIS1">
    <property type="interactions" value="370"/>
</dbReference>
<dbReference type="STRING" id="335543.Sfum_1636"/>
<dbReference type="KEGG" id="sfu:Sfum_1636"/>
<dbReference type="eggNOG" id="COG0245">
    <property type="taxonomic scope" value="Bacteria"/>
</dbReference>
<dbReference type="HOGENOM" id="CLU_084630_2_0_7"/>
<dbReference type="InParanoid" id="A0LIS1"/>
<dbReference type="OrthoDB" id="9804336at2"/>
<dbReference type="UniPathway" id="UPA00056">
    <property type="reaction ID" value="UER00095"/>
</dbReference>
<dbReference type="Proteomes" id="UP000001784">
    <property type="component" value="Chromosome"/>
</dbReference>
<dbReference type="GO" id="GO:0008685">
    <property type="term" value="F:2-C-methyl-D-erythritol 2,4-cyclodiphosphate synthase activity"/>
    <property type="evidence" value="ECO:0007669"/>
    <property type="project" value="UniProtKB-UniRule"/>
</dbReference>
<dbReference type="GO" id="GO:0046872">
    <property type="term" value="F:metal ion binding"/>
    <property type="evidence" value="ECO:0007669"/>
    <property type="project" value="UniProtKB-KW"/>
</dbReference>
<dbReference type="GO" id="GO:0019288">
    <property type="term" value="P:isopentenyl diphosphate biosynthetic process, methylerythritol 4-phosphate pathway"/>
    <property type="evidence" value="ECO:0007669"/>
    <property type="project" value="UniProtKB-UniRule"/>
</dbReference>
<dbReference type="GO" id="GO:0016114">
    <property type="term" value="P:terpenoid biosynthetic process"/>
    <property type="evidence" value="ECO:0007669"/>
    <property type="project" value="InterPro"/>
</dbReference>
<dbReference type="CDD" id="cd00554">
    <property type="entry name" value="MECDP_synthase"/>
    <property type="match status" value="1"/>
</dbReference>
<dbReference type="FunFam" id="3.30.1330.50:FF:000001">
    <property type="entry name" value="2-C-methyl-D-erythritol 2,4-cyclodiphosphate synthase"/>
    <property type="match status" value="1"/>
</dbReference>
<dbReference type="Gene3D" id="3.30.1330.50">
    <property type="entry name" value="2-C-methyl-D-erythritol 2,4-cyclodiphosphate synthase"/>
    <property type="match status" value="1"/>
</dbReference>
<dbReference type="HAMAP" id="MF_00107">
    <property type="entry name" value="IspF"/>
    <property type="match status" value="1"/>
</dbReference>
<dbReference type="InterPro" id="IPR003526">
    <property type="entry name" value="MECDP_synthase"/>
</dbReference>
<dbReference type="InterPro" id="IPR020555">
    <property type="entry name" value="MECDP_synthase_CS"/>
</dbReference>
<dbReference type="InterPro" id="IPR036571">
    <property type="entry name" value="MECDP_synthase_sf"/>
</dbReference>
<dbReference type="NCBIfam" id="TIGR00151">
    <property type="entry name" value="ispF"/>
    <property type="match status" value="1"/>
</dbReference>
<dbReference type="PANTHER" id="PTHR43181">
    <property type="entry name" value="2-C-METHYL-D-ERYTHRITOL 2,4-CYCLODIPHOSPHATE SYNTHASE, CHLOROPLASTIC"/>
    <property type="match status" value="1"/>
</dbReference>
<dbReference type="PANTHER" id="PTHR43181:SF1">
    <property type="entry name" value="2-C-METHYL-D-ERYTHRITOL 2,4-CYCLODIPHOSPHATE SYNTHASE, CHLOROPLASTIC"/>
    <property type="match status" value="1"/>
</dbReference>
<dbReference type="Pfam" id="PF02542">
    <property type="entry name" value="YgbB"/>
    <property type="match status" value="1"/>
</dbReference>
<dbReference type="SUPFAM" id="SSF69765">
    <property type="entry name" value="IpsF-like"/>
    <property type="match status" value="1"/>
</dbReference>
<dbReference type="PROSITE" id="PS01350">
    <property type="entry name" value="ISPF"/>
    <property type="match status" value="1"/>
</dbReference>
<comment type="function">
    <text evidence="1">Involved in the biosynthesis of isopentenyl diphosphate (IPP) and dimethylallyl diphosphate (DMAPP), two major building blocks of isoprenoid compounds. Catalyzes the conversion of 4-diphosphocytidyl-2-C-methyl-D-erythritol 2-phosphate (CDP-ME2P) to 2-C-methyl-D-erythritol 2,4-cyclodiphosphate (ME-CPP) with a corresponding release of cytidine 5-monophosphate (CMP).</text>
</comment>
<comment type="catalytic activity">
    <reaction evidence="1">
        <text>4-CDP-2-C-methyl-D-erythritol 2-phosphate = 2-C-methyl-D-erythritol 2,4-cyclic diphosphate + CMP</text>
        <dbReference type="Rhea" id="RHEA:23864"/>
        <dbReference type="ChEBI" id="CHEBI:57919"/>
        <dbReference type="ChEBI" id="CHEBI:58483"/>
        <dbReference type="ChEBI" id="CHEBI:60377"/>
        <dbReference type="EC" id="4.6.1.12"/>
    </reaction>
</comment>
<comment type="cofactor">
    <cofactor evidence="1">
        <name>a divalent metal cation</name>
        <dbReference type="ChEBI" id="CHEBI:60240"/>
    </cofactor>
    <text evidence="1">Binds 1 divalent metal cation per subunit.</text>
</comment>
<comment type="pathway">
    <text evidence="1">Isoprenoid biosynthesis; isopentenyl diphosphate biosynthesis via DXP pathway; isopentenyl diphosphate from 1-deoxy-D-xylulose 5-phosphate: step 4/6.</text>
</comment>
<comment type="subunit">
    <text evidence="1">Homotrimer.</text>
</comment>
<comment type="similarity">
    <text evidence="1">Belongs to the IspF family.</text>
</comment>
<proteinExistence type="inferred from homology"/>
<feature type="chain" id="PRO_1000022888" description="2-C-methyl-D-erythritol 2,4-cyclodiphosphate synthase">
    <location>
        <begin position="1"/>
        <end position="159"/>
    </location>
</feature>
<feature type="binding site" evidence="1">
    <location>
        <begin position="8"/>
        <end position="10"/>
    </location>
    <ligand>
        <name>4-CDP-2-C-methyl-D-erythritol 2-phosphate</name>
        <dbReference type="ChEBI" id="CHEBI:57919"/>
    </ligand>
</feature>
<feature type="binding site" evidence="1">
    <location>
        <position position="8"/>
    </location>
    <ligand>
        <name>a divalent metal cation</name>
        <dbReference type="ChEBI" id="CHEBI:60240"/>
    </ligand>
</feature>
<feature type="binding site" evidence="1">
    <location>
        <position position="10"/>
    </location>
    <ligand>
        <name>a divalent metal cation</name>
        <dbReference type="ChEBI" id="CHEBI:60240"/>
    </ligand>
</feature>
<feature type="binding site" evidence="1">
    <location>
        <begin position="34"/>
        <end position="35"/>
    </location>
    <ligand>
        <name>4-CDP-2-C-methyl-D-erythritol 2-phosphate</name>
        <dbReference type="ChEBI" id="CHEBI:57919"/>
    </ligand>
</feature>
<feature type="binding site" evidence="1">
    <location>
        <position position="42"/>
    </location>
    <ligand>
        <name>a divalent metal cation</name>
        <dbReference type="ChEBI" id="CHEBI:60240"/>
    </ligand>
</feature>
<feature type="binding site" evidence="1">
    <location>
        <begin position="56"/>
        <end position="58"/>
    </location>
    <ligand>
        <name>4-CDP-2-C-methyl-D-erythritol 2-phosphate</name>
        <dbReference type="ChEBI" id="CHEBI:57919"/>
    </ligand>
</feature>
<feature type="binding site" evidence="1">
    <location>
        <begin position="61"/>
        <end position="65"/>
    </location>
    <ligand>
        <name>4-CDP-2-C-methyl-D-erythritol 2-phosphate</name>
        <dbReference type="ChEBI" id="CHEBI:57919"/>
    </ligand>
</feature>
<feature type="binding site" evidence="1">
    <location>
        <begin position="132"/>
        <end position="135"/>
    </location>
    <ligand>
        <name>4-CDP-2-C-methyl-D-erythritol 2-phosphate</name>
        <dbReference type="ChEBI" id="CHEBI:57919"/>
    </ligand>
</feature>
<feature type="binding site" evidence="1">
    <location>
        <position position="139"/>
    </location>
    <ligand>
        <name>4-CDP-2-C-methyl-D-erythritol 2-phosphate</name>
        <dbReference type="ChEBI" id="CHEBI:57919"/>
    </ligand>
</feature>
<feature type="binding site" evidence="1">
    <location>
        <position position="142"/>
    </location>
    <ligand>
        <name>4-CDP-2-C-methyl-D-erythritol 2-phosphate</name>
        <dbReference type="ChEBI" id="CHEBI:57919"/>
    </ligand>
</feature>
<feature type="site" description="Transition state stabilizer" evidence="1">
    <location>
        <position position="34"/>
    </location>
</feature>
<feature type="site" description="Transition state stabilizer" evidence="1">
    <location>
        <position position="133"/>
    </location>
</feature>
<organism>
    <name type="scientific">Syntrophobacter fumaroxidans (strain DSM 10017 / MPOB)</name>
    <dbReference type="NCBI Taxonomy" id="335543"/>
    <lineage>
        <taxon>Bacteria</taxon>
        <taxon>Pseudomonadati</taxon>
        <taxon>Thermodesulfobacteriota</taxon>
        <taxon>Syntrophobacteria</taxon>
        <taxon>Syntrophobacterales</taxon>
        <taxon>Syntrophobacteraceae</taxon>
        <taxon>Syntrophobacter</taxon>
    </lineage>
</organism>
<accession>A0LIS1</accession>
<name>ISPF_SYNFM</name>
<evidence type="ECO:0000255" key="1">
    <source>
        <dbReference type="HAMAP-Rule" id="MF_00107"/>
    </source>
</evidence>
<sequence length="159" mass="17081">MRVGFGYDVHAFVEGRPLVLGGVKVPHDRGLLGHSDADVLLHAICDALLGGAALGDIGRHFPDTDPRFKGISSLLLLRQTVELVRRAGFRIANIDTTLVLQKPRLAPYIARMAEEIGRATDLPVSSVNVKATTTEKLGFAGREEGVAAYAVVLLRSDGR</sequence>